<comment type="function">
    <molecule>Isoform VP2</molecule>
    <text evidence="1">Structural protein that resides within the core of the capsid surrounded by 72 VP1 pentamers. Participates in host cell receptor binding together with VP1. Following virus endocytosis and trafficking to the endoplasmic reticulum, VP2 and VP3 form oligomers and integrate into the endoplasmic reticulum membrane. Heterooligomer VP2-VP3 may create a viroporin for transporting the viral genome across the endoplasmic reticulum membrane to the cytoplasm. Nuclear entry of the viral DNA involves the selective exposure and importin recognition of VP2 or VP3 nuclear localization signal (shared C-terminus). Plays a role in virion assembly within the nucleus in particular through a DNA-binding domain located in the C-terminal region. A N-terminal myristoylation suggests a scaffold function for virion assembly (By similarity).</text>
</comment>
<comment type="function">
    <molecule>Isoform VP3</molecule>
    <text evidence="1">Structural protein that resides within the core of the capsid surrounded by 72 VP1 pentamers. Following virus endocytosis and trafficking to the endoplasmic reticulum, VP2 and VP3 form oligomers and integrate into the endoplasmic reticulum membrane. Heterooligomer VP2-VP3 may create a viroporin for transporting the viral genome across the endoplasmic reticulum membrane to the cytoplasm. Nuclear entry of the viral DNA involves the selective exposure and importin recognition of VP2 or VP3 nuclear localization signal (shared C-terminus). Plays a role in virion assembly within the nucleus. May participate in host cell lysis when associated with VP4 (By similarity).</text>
</comment>
<comment type="function">
    <molecule>Isoform VP4</molecule>
    <text evidence="1">Viroporin inducing perforation of cellular membranes to trigger virus progeny release. Forms pores of 3 nm inner diameter. VP4 is expressed about 24 hours after the late structural proteins and is not incorporated into the mature virion (By similarity).</text>
</comment>
<comment type="subunit">
    <molecule>Isoform VP2</molecule>
    <text evidence="4">Forms homooligomers, and heterooligomers with VP3 in the endoplasmic reticulum membrane. Interacts (via D1 domain) with VP1.</text>
</comment>
<comment type="subunit">
    <molecule>Isoform VP3</molecule>
    <text evidence="1">Forms homooligomers, and heterooligomers with VP2 in the endoplasmic reticulum membrane. Interacts (via D1 domain) with VP1 (By similarity).</text>
</comment>
<comment type="subcellular location">
    <molecule>Isoform VP2</molecule>
    <subcellularLocation>
        <location>Virion</location>
    </subcellularLocation>
    <subcellularLocation>
        <location>Host nucleus</location>
    </subcellularLocation>
    <subcellularLocation>
        <location>Host endoplasmic reticulum</location>
    </subcellularLocation>
    <subcellularLocation>
        <location evidence="1">Host endoplasmic reticulum membrane</location>
    </subcellularLocation>
</comment>
<comment type="subcellular location">
    <molecule>Isoform VP3</molecule>
    <subcellularLocation>
        <location>Virion</location>
    </subcellularLocation>
    <subcellularLocation>
        <location>Host nucleus</location>
    </subcellularLocation>
    <subcellularLocation>
        <location>Host endoplasmic reticulum</location>
    </subcellularLocation>
    <subcellularLocation>
        <location evidence="1">Host endoplasmic reticulum membrane</location>
    </subcellularLocation>
</comment>
<comment type="subcellular location">
    <molecule>Isoform VP4</molecule>
    <subcellularLocation>
        <location evidence="1">Host nucleus</location>
    </subcellularLocation>
</comment>
<comment type="alternative products">
    <event type="alternative splicing"/>
    <event type="alternative initiation"/>
    <isoform>
        <id>P03095-1</id>
        <name>VP2</name>
        <name>Minor capsid protein VP2</name>
        <sequence type="displayed"/>
    </isoform>
    <isoform>
        <id>P03095-2</id>
        <name>VP3</name>
        <name>Minor capsid protein VP3</name>
        <sequence type="described" ref="VSP_018919"/>
    </isoform>
    <isoform>
        <id>P03095-3</id>
        <name>VP4</name>
        <name>Viroporin VP4</name>
        <sequence type="described" ref="VSP_036015"/>
    </isoform>
    <isoform>
        <id>P03089-1</id>
        <name>VP1</name>
        <name>Major capsid protein VP1</name>
        <sequence type="external"/>
    </isoform>
    <isoform>
        <id>P03086-1</id>
        <name>Agno</name>
        <sequence type="external"/>
    </isoform>
</comment>
<comment type="miscellaneous">
    <molecule>Isoform VP2</molecule>
    <text>Produced by alternative splicing of the late mRNA.</text>
</comment>
<comment type="miscellaneous">
    <molecule>Isoform VP3</molecule>
    <text evidence="4">Produced by alternative initiation at Met-120 of isoform VP2.</text>
</comment>
<comment type="miscellaneous">
    <molecule>Isoform VP4</molecule>
    <text evidence="4">Produced by alternative initiation at Met-229 of isoform VP2.</text>
</comment>
<comment type="similarity">
    <text evidence="4">Belongs to the polyomaviruses capsid protein VP2 family.</text>
</comment>
<evidence type="ECO:0000250" key="1"/>
<evidence type="ECO:0000255" key="2"/>
<evidence type="ECO:0000256" key="3">
    <source>
        <dbReference type="SAM" id="MobiDB-lite"/>
    </source>
</evidence>
<evidence type="ECO:0000305" key="4"/>
<protein>
    <recommendedName>
        <fullName>Minor capsid protein VP2</fullName>
    </recommendedName>
    <alternativeName>
        <fullName>Minor structural protein VP2</fullName>
    </alternativeName>
</protein>
<organismHost>
    <name type="scientific">Homo sapiens</name>
    <name type="common">Human</name>
    <dbReference type="NCBI Taxonomy" id="9606"/>
</organismHost>
<organism>
    <name type="scientific">JC polyomavirus</name>
    <name type="common">JCPyV</name>
    <name type="synonym">JCV</name>
    <dbReference type="NCBI Taxonomy" id="10632"/>
    <lineage>
        <taxon>Viruses</taxon>
        <taxon>Monodnaviria</taxon>
        <taxon>Shotokuvirae</taxon>
        <taxon>Cossaviricota</taxon>
        <taxon>Papovaviricetes</taxon>
        <taxon>Sepolyvirales</taxon>
        <taxon>Polyomaviridae</taxon>
        <taxon>Betapolyomavirus</taxon>
        <taxon>Betapolyomavirus secuhominis</taxon>
    </lineage>
</organism>
<proteinExistence type="inferred from homology"/>
<sequence length="344" mass="37368">MGAALALLGDLVATVSEAAAATGFSVAEIAAGEAAATIEVEIASLATVEGITSTSEAIAAIGLTPETYAVITGAPGAVAGFAALVQTVTGGSAIAQLGYRFFADWDHKVSTVGLFQQPAMALQLFNPEDYYDILFPGVNAFVNNIHYLDPRHWGPSLFSTISQAFWNLVRDDLPALTSQEIQRRTQKLFVESLARFLEETTWAIVNSPANLYNYISDYYSRLSPVRPSMVRQVAQREGTYISFGHSYTQSIDDADSIQEVTQRLDLKTPNVQSGEFIERSIAPGGANQRSAPQWMLPLLLGLYGTVTPALEAYEDGPNKKKRRKEGPRASSKTSYKRRSRSSRS</sequence>
<keyword id="KW-0024">Alternative initiation</keyword>
<keyword id="KW-0025">Alternative splicing</keyword>
<keyword id="KW-0167">Capsid protein</keyword>
<keyword id="KW-0238">DNA-binding</keyword>
<keyword id="KW-1038">Host endoplasmic reticulum</keyword>
<keyword id="KW-1043">Host membrane</keyword>
<keyword id="KW-1048">Host nucleus</keyword>
<keyword id="KW-0945">Host-virus interaction</keyword>
<keyword id="KW-0407">Ion channel</keyword>
<keyword id="KW-0406">Ion transport</keyword>
<keyword id="KW-0426">Late protein</keyword>
<keyword id="KW-0449">Lipoprotein</keyword>
<keyword id="KW-0472">Membrane</keyword>
<keyword id="KW-0519">Myristate</keyword>
<keyword id="KW-1185">Reference proteome</keyword>
<keyword id="KW-0812">Transmembrane</keyword>
<keyword id="KW-1133">Transmembrane helix</keyword>
<keyword id="KW-0813">Transport</keyword>
<keyword id="KW-1161">Viral attachment to host cell</keyword>
<keyword id="KW-1182">Viral ion channel</keyword>
<keyword id="KW-1162">Viral penetration into host cytoplasm</keyword>
<keyword id="KW-1163">Viral penetration into host nucleus</keyword>
<keyword id="KW-1173">Viral penetration via permeabilization of host membrane</keyword>
<keyword id="KW-1188">Viral release from host cell</keyword>
<keyword id="KW-0946">Virion</keyword>
<keyword id="KW-1160">Virus entry into host cell</keyword>
<reference key="1">
    <citation type="journal article" date="1984" name="J. Virol.">
        <title>Human polyomavirus JC virus genome.</title>
        <authorList>
            <person name="Frisque R.J."/>
            <person name="Bream G.L."/>
            <person name="Cannella M.T."/>
        </authorList>
    </citation>
    <scope>NUCLEOTIDE SEQUENCE [GENOMIC DNA]</scope>
</reference>
<reference key="2">
    <citation type="journal article" date="2009" name="Virology">
        <title>The Polyomaviridae: Contributions of virus structure to our understanding of virus receptors and infectious entry.</title>
        <authorList>
            <person name="Neu U."/>
            <person name="Stehle T."/>
            <person name="Atwood W.J."/>
        </authorList>
    </citation>
    <scope>REVIEW</scope>
</reference>
<dbReference type="EMBL" id="J02226">
    <property type="protein sequence ID" value="AAA82099.1"/>
    <property type="molecule type" value="Genomic_DNA"/>
</dbReference>
<dbReference type="EMBL" id="J02226">
    <property type="protein sequence ID" value="AAA82100.1"/>
    <property type="molecule type" value="Genomic_DNA"/>
</dbReference>
<dbReference type="PIR" id="A03633">
    <property type="entry name" value="VVVP2J"/>
</dbReference>
<dbReference type="RefSeq" id="NP_043509.1">
    <molecule id="P03095-1"/>
    <property type="nucleotide sequence ID" value="NC_001699.1"/>
</dbReference>
<dbReference type="RefSeq" id="NP_043510.1">
    <molecule id="P03095-2"/>
    <property type="nucleotide sequence ID" value="NC_001699.1"/>
</dbReference>
<dbReference type="DNASU" id="1489520"/>
<dbReference type="GeneID" id="1489520"/>
<dbReference type="GeneID" id="1489522"/>
<dbReference type="KEGG" id="vg:1489520"/>
<dbReference type="KEGG" id="vg:1489522"/>
<dbReference type="OrthoDB" id="6378at10239"/>
<dbReference type="Proteomes" id="UP000008478">
    <property type="component" value="Genome"/>
</dbReference>
<dbReference type="GO" id="GO:0043657">
    <property type="term" value="C:host cell"/>
    <property type="evidence" value="ECO:0007669"/>
    <property type="project" value="GOC"/>
</dbReference>
<dbReference type="GO" id="GO:0044167">
    <property type="term" value="C:host cell endoplasmic reticulum membrane"/>
    <property type="evidence" value="ECO:0007669"/>
    <property type="project" value="UniProtKB-SubCell"/>
</dbReference>
<dbReference type="GO" id="GO:0042025">
    <property type="term" value="C:host cell nucleus"/>
    <property type="evidence" value="ECO:0007669"/>
    <property type="project" value="UniProtKB-SubCell"/>
</dbReference>
<dbReference type="GO" id="GO:0016020">
    <property type="term" value="C:membrane"/>
    <property type="evidence" value="ECO:0007669"/>
    <property type="project" value="UniProtKB-KW"/>
</dbReference>
<dbReference type="GO" id="GO:0019028">
    <property type="term" value="C:viral capsid"/>
    <property type="evidence" value="ECO:0007669"/>
    <property type="project" value="UniProtKB-KW"/>
</dbReference>
<dbReference type="GO" id="GO:0015267">
    <property type="term" value="F:channel activity"/>
    <property type="evidence" value="ECO:0007669"/>
    <property type="project" value="UniProtKB-KW"/>
</dbReference>
<dbReference type="GO" id="GO:0003677">
    <property type="term" value="F:DNA binding"/>
    <property type="evidence" value="ECO:0007669"/>
    <property type="project" value="UniProtKB-KW"/>
</dbReference>
<dbReference type="GO" id="GO:0005198">
    <property type="term" value="F:structural molecule activity"/>
    <property type="evidence" value="ECO:0007669"/>
    <property type="project" value="InterPro"/>
</dbReference>
<dbReference type="GO" id="GO:0034220">
    <property type="term" value="P:monoatomic ion transmembrane transport"/>
    <property type="evidence" value="ECO:0007669"/>
    <property type="project" value="UniProtKB-KW"/>
</dbReference>
<dbReference type="GO" id="GO:0140267">
    <property type="term" value="P:symbiont entry into host cell via permeabilization of host membrane"/>
    <property type="evidence" value="ECO:0007669"/>
    <property type="project" value="UniProtKB-KW"/>
</dbReference>
<dbReference type="GO" id="GO:0075732">
    <property type="term" value="P:viral penetration into host nucleus"/>
    <property type="evidence" value="ECO:0007669"/>
    <property type="project" value="UniProtKB-KW"/>
</dbReference>
<dbReference type="GO" id="GO:0019062">
    <property type="term" value="P:virion attachment to host cell"/>
    <property type="evidence" value="ECO:0007669"/>
    <property type="project" value="UniProtKB-KW"/>
</dbReference>
<dbReference type="InterPro" id="IPR001070">
    <property type="entry name" value="Polyoma_coat_VP2"/>
</dbReference>
<dbReference type="Pfam" id="PF00761">
    <property type="entry name" value="Polyoma_coat2"/>
    <property type="match status" value="1"/>
</dbReference>
<dbReference type="PIRSF" id="PIRSF003377">
    <property type="entry name" value="Polyoma_coat2"/>
    <property type="match status" value="1"/>
</dbReference>
<name>VP2_POVJC</name>
<accession>P03095</accession>
<feature type="initiator methionine" description="Removed; by host" evidence="1">
    <location>
        <position position="1"/>
    </location>
</feature>
<feature type="chain" id="PRO_0000039211" description="Minor capsid protein VP2">
    <location>
        <begin position="2"/>
        <end position="344"/>
    </location>
</feature>
<feature type="transmembrane region" description="Helical" evidence="2">
    <location>
        <begin position="290"/>
        <end position="310"/>
    </location>
</feature>
<feature type="region of interest" description="D1" evidence="1">
    <location>
        <begin position="273"/>
        <end position="308"/>
    </location>
</feature>
<feature type="region of interest" description="Disordered" evidence="3">
    <location>
        <begin position="312"/>
        <end position="344"/>
    </location>
</feature>
<feature type="region of interest" description="DNA-binding" evidence="1">
    <location>
        <begin position="313"/>
        <end position="344"/>
    </location>
</feature>
<feature type="short sequence motif" description="Nuclear localization signal" evidence="1">
    <location>
        <begin position="316"/>
        <end position="324"/>
    </location>
</feature>
<feature type="compositionally biased region" description="Basic residues" evidence="3">
    <location>
        <begin position="334"/>
        <end position="344"/>
    </location>
</feature>
<feature type="lipid moiety-binding region" description="N-myristoyl glycine; by host" evidence="1">
    <location>
        <position position="2"/>
    </location>
</feature>
<feature type="splice variant" id="VSP_036015" description="In isoform VP4." evidence="4">
    <location>
        <begin position="1"/>
        <end position="228"/>
    </location>
</feature>
<feature type="splice variant" id="VSP_018919" description="In isoform VP3." evidence="4">
    <location>
        <begin position="1"/>
        <end position="119"/>
    </location>
</feature>